<evidence type="ECO:0000250" key="1"/>
<evidence type="ECO:0000255" key="2"/>
<evidence type="ECO:0000305" key="3"/>
<accession>Q99RR7</accession>
<keyword id="KW-1003">Cell membrane</keyword>
<keyword id="KW-0472">Membrane</keyword>
<keyword id="KW-0812">Transmembrane</keyword>
<keyword id="KW-1133">Transmembrane helix</keyword>
<keyword id="KW-0813">Transport</keyword>
<sequence>MKLAIKEIMFYKFRYILITLIILLLSIMVLFISGLAQGLGRENISLFEHFDNDEYVVQKMKEPQIEKSQLSDTQQNQIKKVIHQEPYKMNIQTLKLSNKEQDVITMNDVKQQRIQLKKGDYPKNAHEVAINDKLAADNIRVGDRLHFKNNSTSYRVSGILNDTMYAHSSIVLLNDNGFNALNKVNTAFYPVKNLTQQQRDELNKINDVQVVSEKDLTGNIASYQAEQAPLNMMIVSLFAITAIVLSAFFYVMTIQKISQIGILKAIGIKTRHLLSALVLQILTLTIIGVGIAVIIIVGLSFMMPVTMPFYLTTQNILLMVGIFILVAILGASLSFIKLFKVDPIEAIGGAE</sequence>
<proteinExistence type="inferred from homology"/>
<protein>
    <recommendedName>
        <fullName>Putative hemin transport system permease protein HrtB</fullName>
    </recommendedName>
</protein>
<name>HRTB_STAAM</name>
<gene>
    <name type="primary">hrtB</name>
    <name type="ordered locus">SAV2360</name>
</gene>
<organism>
    <name type="scientific">Staphylococcus aureus (strain Mu50 / ATCC 700699)</name>
    <dbReference type="NCBI Taxonomy" id="158878"/>
    <lineage>
        <taxon>Bacteria</taxon>
        <taxon>Bacillati</taxon>
        <taxon>Bacillota</taxon>
        <taxon>Bacilli</taxon>
        <taxon>Bacillales</taxon>
        <taxon>Staphylococcaceae</taxon>
        <taxon>Staphylococcus</taxon>
    </lineage>
</organism>
<reference key="1">
    <citation type="journal article" date="2001" name="Lancet">
        <title>Whole genome sequencing of meticillin-resistant Staphylococcus aureus.</title>
        <authorList>
            <person name="Kuroda M."/>
            <person name="Ohta T."/>
            <person name="Uchiyama I."/>
            <person name="Baba T."/>
            <person name="Yuzawa H."/>
            <person name="Kobayashi I."/>
            <person name="Cui L."/>
            <person name="Oguchi A."/>
            <person name="Aoki K."/>
            <person name="Nagai Y."/>
            <person name="Lian J.-Q."/>
            <person name="Ito T."/>
            <person name="Kanamori M."/>
            <person name="Matsumaru H."/>
            <person name="Maruyama A."/>
            <person name="Murakami H."/>
            <person name="Hosoyama A."/>
            <person name="Mizutani-Ui Y."/>
            <person name="Takahashi N.K."/>
            <person name="Sawano T."/>
            <person name="Inoue R."/>
            <person name="Kaito C."/>
            <person name="Sekimizu K."/>
            <person name="Hirakawa H."/>
            <person name="Kuhara S."/>
            <person name="Goto S."/>
            <person name="Yabuzaki J."/>
            <person name="Kanehisa M."/>
            <person name="Yamashita A."/>
            <person name="Oshima K."/>
            <person name="Furuya K."/>
            <person name="Yoshino C."/>
            <person name="Shiba T."/>
            <person name="Hattori M."/>
            <person name="Ogasawara N."/>
            <person name="Hayashi H."/>
            <person name="Hiramatsu K."/>
        </authorList>
    </citation>
    <scope>NUCLEOTIDE SEQUENCE [LARGE SCALE GENOMIC DNA]</scope>
    <source>
        <strain>Mu50 / ATCC 700699</strain>
    </source>
</reference>
<comment type="function">
    <text evidence="1">Part of the ABC transporter complex hrt involved in hemin import. Responsible for the translocation of the substrate across the membrane (By similarity).</text>
</comment>
<comment type="subunit">
    <text evidence="1">The complex is composed of two ATP-binding proteins (HrtA), two transmembrane proteins (HrtB) and a solute-binding protein.</text>
</comment>
<comment type="subcellular location">
    <subcellularLocation>
        <location evidence="3">Cell membrane</location>
        <topology evidence="3">Multi-pass membrane protein</topology>
    </subcellularLocation>
</comment>
<comment type="similarity">
    <text evidence="3">Belongs to the ABC-4 integral membrane protein family. HrtB subfamily.</text>
</comment>
<dbReference type="EMBL" id="BA000017">
    <property type="protein sequence ID" value="BAB58522.1"/>
    <property type="molecule type" value="Genomic_DNA"/>
</dbReference>
<dbReference type="RefSeq" id="WP_000761395.1">
    <property type="nucleotide sequence ID" value="NC_002758.2"/>
</dbReference>
<dbReference type="SMR" id="Q99RR7"/>
<dbReference type="KEGG" id="sav:SAV2360"/>
<dbReference type="HOGENOM" id="CLU_060907_1_0_9"/>
<dbReference type="PhylomeDB" id="Q99RR7"/>
<dbReference type="Proteomes" id="UP000002481">
    <property type="component" value="Chromosome"/>
</dbReference>
<dbReference type="GO" id="GO:0005886">
    <property type="term" value="C:plasma membrane"/>
    <property type="evidence" value="ECO:0007669"/>
    <property type="project" value="UniProtKB-SubCell"/>
</dbReference>
<dbReference type="InterPro" id="IPR051125">
    <property type="entry name" value="ABC-4/HrtB_transporter"/>
</dbReference>
<dbReference type="InterPro" id="IPR003838">
    <property type="entry name" value="ABC3_permease_C"/>
</dbReference>
<dbReference type="PANTHER" id="PTHR43738">
    <property type="entry name" value="ABC TRANSPORTER, MEMBRANE PROTEIN"/>
    <property type="match status" value="1"/>
</dbReference>
<dbReference type="PANTHER" id="PTHR43738:SF1">
    <property type="entry name" value="HEMIN TRANSPORT SYSTEM PERMEASE PROTEIN HRTB-RELATED"/>
    <property type="match status" value="1"/>
</dbReference>
<dbReference type="Pfam" id="PF02687">
    <property type="entry name" value="FtsX"/>
    <property type="match status" value="1"/>
</dbReference>
<feature type="chain" id="PRO_0000270520" description="Putative hemin transport system permease protein HrtB">
    <location>
        <begin position="1"/>
        <end position="351"/>
    </location>
</feature>
<feature type="transmembrane region" description="Helical" evidence="2">
    <location>
        <begin position="16"/>
        <end position="36"/>
    </location>
</feature>
<feature type="transmembrane region" description="Helical" evidence="2">
    <location>
        <begin position="234"/>
        <end position="254"/>
    </location>
</feature>
<feature type="transmembrane region" description="Helical" evidence="2">
    <location>
        <begin position="281"/>
        <end position="301"/>
    </location>
</feature>
<feature type="transmembrane region" description="Helical" evidence="2">
    <location>
        <begin position="316"/>
        <end position="336"/>
    </location>
</feature>